<sequence>MDTGKIVQIIGPVIDVKFEISFIPKINFALEIKIKNKKLIMEVMQQIGDGIVRCILMGSSDGLKRGLKVFNLNKGIEVPVGKPTLGRIMNVLGDPIDRKGKILSSEYRPIHNKSPSYNEISSSDELLETGIKIIDLICPFAKGGKIGLFGGAGVGKTVNMMELIRNIAIEHSGYSVFSGVGERTREGNDFYNEMISSNVIDKVSLVYGQMNEPPGNRLRVALTGLTLAEKFRDEGNDVLFFVDNIYRYTLAGTEVSALLGRIPSAVGYQPTLSEEMGILQERITSTKSGSITSVQAIYVPADDLTDPSPATTFVHLDATVVLSRQIASLGIYPAIDPLDSTSRQLDPLIVGEDHYLVARKIQSILQRYKDLKDIIAILGIDELSEEDKILVSRARKIQRFLSQPFFVAEIFTGFSGKYVTLKDTIDGFNSIINGEYDYIPEQAFYMTGNISDVLDKYKKFYS</sequence>
<feature type="chain" id="PRO_0000254424" description="ATP synthase subunit beta">
    <location>
        <begin position="1"/>
        <end position="462"/>
    </location>
</feature>
<feature type="binding site" evidence="1">
    <location>
        <begin position="150"/>
        <end position="157"/>
    </location>
    <ligand>
        <name>ATP</name>
        <dbReference type="ChEBI" id="CHEBI:30616"/>
    </ligand>
</feature>
<comment type="function">
    <text evidence="1">Produces ATP from ADP in the presence of a proton gradient across the membrane. The catalytic sites are hosted primarily by the beta subunits.</text>
</comment>
<comment type="catalytic activity">
    <reaction evidence="1">
        <text>ATP + H2O + 4 H(+)(in) = ADP + phosphate + 5 H(+)(out)</text>
        <dbReference type="Rhea" id="RHEA:57720"/>
        <dbReference type="ChEBI" id="CHEBI:15377"/>
        <dbReference type="ChEBI" id="CHEBI:15378"/>
        <dbReference type="ChEBI" id="CHEBI:30616"/>
        <dbReference type="ChEBI" id="CHEBI:43474"/>
        <dbReference type="ChEBI" id="CHEBI:456216"/>
        <dbReference type="EC" id="7.1.2.2"/>
    </reaction>
</comment>
<comment type="subunit">
    <text evidence="1">F-type ATPases have 2 components, CF(1) - the catalytic core - and CF(0) - the membrane proton channel. CF(1) has five subunits: alpha(3), beta(3), gamma(1), delta(1), epsilon(1). CF(0) has three main subunits: a(1), b(2) and c(9-12). The alpha and beta chains form an alternating ring which encloses part of the gamma chain. CF(1) is attached to CF(0) by a central stalk formed by the gamma and epsilon chains, while a peripheral stalk is formed by the delta and b chains.</text>
</comment>
<comment type="subcellular location">
    <subcellularLocation>
        <location evidence="1">Cell membrane</location>
        <topology evidence="1">Peripheral membrane protein</topology>
    </subcellularLocation>
</comment>
<comment type="similarity">
    <text evidence="1">Belongs to the ATPase alpha/beta chains family.</text>
</comment>
<accession>Q8D3J3</accession>
<gene>
    <name evidence="1" type="primary">atpD</name>
    <name type="ordered locus">WIGBR0080</name>
</gene>
<organism>
    <name type="scientific">Wigglesworthia glossinidia brevipalpis</name>
    <dbReference type="NCBI Taxonomy" id="36870"/>
    <lineage>
        <taxon>Bacteria</taxon>
        <taxon>Pseudomonadati</taxon>
        <taxon>Pseudomonadota</taxon>
        <taxon>Gammaproteobacteria</taxon>
        <taxon>Enterobacterales</taxon>
        <taxon>Erwiniaceae</taxon>
        <taxon>Wigglesworthia</taxon>
    </lineage>
</organism>
<dbReference type="EC" id="7.1.2.2" evidence="1"/>
<dbReference type="EMBL" id="BA000021">
    <property type="protein sequence ID" value="BAC24154.1"/>
    <property type="molecule type" value="Genomic_DNA"/>
</dbReference>
<dbReference type="SMR" id="Q8D3J3"/>
<dbReference type="STRING" id="36870.gene:10368486"/>
<dbReference type="KEGG" id="wbr:atpD"/>
<dbReference type="eggNOG" id="COG0055">
    <property type="taxonomic scope" value="Bacteria"/>
</dbReference>
<dbReference type="HOGENOM" id="CLU_022398_0_2_6"/>
<dbReference type="OrthoDB" id="9801639at2"/>
<dbReference type="Proteomes" id="UP000000562">
    <property type="component" value="Chromosome"/>
</dbReference>
<dbReference type="GO" id="GO:0005886">
    <property type="term" value="C:plasma membrane"/>
    <property type="evidence" value="ECO:0007669"/>
    <property type="project" value="UniProtKB-SubCell"/>
</dbReference>
<dbReference type="GO" id="GO:0045259">
    <property type="term" value="C:proton-transporting ATP synthase complex"/>
    <property type="evidence" value="ECO:0007669"/>
    <property type="project" value="UniProtKB-KW"/>
</dbReference>
<dbReference type="GO" id="GO:0005524">
    <property type="term" value="F:ATP binding"/>
    <property type="evidence" value="ECO:0007669"/>
    <property type="project" value="UniProtKB-UniRule"/>
</dbReference>
<dbReference type="GO" id="GO:0046933">
    <property type="term" value="F:proton-transporting ATP synthase activity, rotational mechanism"/>
    <property type="evidence" value="ECO:0007669"/>
    <property type="project" value="UniProtKB-UniRule"/>
</dbReference>
<dbReference type="CDD" id="cd18110">
    <property type="entry name" value="ATP-synt_F1_beta_C"/>
    <property type="match status" value="1"/>
</dbReference>
<dbReference type="CDD" id="cd18115">
    <property type="entry name" value="ATP-synt_F1_beta_N"/>
    <property type="match status" value="1"/>
</dbReference>
<dbReference type="CDD" id="cd01133">
    <property type="entry name" value="F1-ATPase_beta_CD"/>
    <property type="match status" value="1"/>
</dbReference>
<dbReference type="FunFam" id="1.10.1140.10:FF:000001">
    <property type="entry name" value="ATP synthase subunit beta"/>
    <property type="match status" value="1"/>
</dbReference>
<dbReference type="FunFam" id="3.40.50.300:FF:000004">
    <property type="entry name" value="ATP synthase subunit beta"/>
    <property type="match status" value="1"/>
</dbReference>
<dbReference type="Gene3D" id="2.40.10.170">
    <property type="match status" value="1"/>
</dbReference>
<dbReference type="Gene3D" id="1.10.1140.10">
    <property type="entry name" value="Bovine Mitochondrial F1-atpase, Atp Synthase Beta Chain, Chain D, domain 3"/>
    <property type="match status" value="1"/>
</dbReference>
<dbReference type="Gene3D" id="3.40.50.300">
    <property type="entry name" value="P-loop containing nucleotide triphosphate hydrolases"/>
    <property type="match status" value="1"/>
</dbReference>
<dbReference type="HAMAP" id="MF_01347">
    <property type="entry name" value="ATP_synth_beta_bact"/>
    <property type="match status" value="1"/>
</dbReference>
<dbReference type="InterPro" id="IPR055190">
    <property type="entry name" value="ATP-synt_VA_C"/>
</dbReference>
<dbReference type="InterPro" id="IPR005722">
    <property type="entry name" value="ATP_synth_F1_bsu"/>
</dbReference>
<dbReference type="InterPro" id="IPR020003">
    <property type="entry name" value="ATPase_a/bsu_AS"/>
</dbReference>
<dbReference type="InterPro" id="IPR050053">
    <property type="entry name" value="ATPase_alpha/beta_chains"/>
</dbReference>
<dbReference type="InterPro" id="IPR004100">
    <property type="entry name" value="ATPase_F1/V1/A1_a/bsu_N"/>
</dbReference>
<dbReference type="InterPro" id="IPR036121">
    <property type="entry name" value="ATPase_F1/V1/A1_a/bsu_N_sf"/>
</dbReference>
<dbReference type="InterPro" id="IPR000194">
    <property type="entry name" value="ATPase_F1/V1/A1_a/bsu_nucl-bd"/>
</dbReference>
<dbReference type="InterPro" id="IPR024034">
    <property type="entry name" value="ATPase_F1/V1_b/a_C"/>
</dbReference>
<dbReference type="InterPro" id="IPR027417">
    <property type="entry name" value="P-loop_NTPase"/>
</dbReference>
<dbReference type="NCBIfam" id="TIGR01039">
    <property type="entry name" value="atpD"/>
    <property type="match status" value="1"/>
</dbReference>
<dbReference type="PANTHER" id="PTHR15184">
    <property type="entry name" value="ATP SYNTHASE"/>
    <property type="match status" value="1"/>
</dbReference>
<dbReference type="PANTHER" id="PTHR15184:SF71">
    <property type="entry name" value="ATP SYNTHASE SUBUNIT BETA, MITOCHONDRIAL"/>
    <property type="match status" value="1"/>
</dbReference>
<dbReference type="Pfam" id="PF00006">
    <property type="entry name" value="ATP-synt_ab"/>
    <property type="match status" value="1"/>
</dbReference>
<dbReference type="Pfam" id="PF02874">
    <property type="entry name" value="ATP-synt_ab_N"/>
    <property type="match status" value="1"/>
</dbReference>
<dbReference type="Pfam" id="PF22919">
    <property type="entry name" value="ATP-synt_VA_C"/>
    <property type="match status" value="1"/>
</dbReference>
<dbReference type="SUPFAM" id="SSF47917">
    <property type="entry name" value="C-terminal domain of alpha and beta subunits of F1 ATP synthase"/>
    <property type="match status" value="1"/>
</dbReference>
<dbReference type="SUPFAM" id="SSF50615">
    <property type="entry name" value="N-terminal domain of alpha and beta subunits of F1 ATP synthase"/>
    <property type="match status" value="1"/>
</dbReference>
<dbReference type="SUPFAM" id="SSF52540">
    <property type="entry name" value="P-loop containing nucleoside triphosphate hydrolases"/>
    <property type="match status" value="1"/>
</dbReference>
<dbReference type="PROSITE" id="PS00152">
    <property type="entry name" value="ATPASE_ALPHA_BETA"/>
    <property type="match status" value="1"/>
</dbReference>
<reference key="1">
    <citation type="journal article" date="2002" name="Nat. Genet.">
        <title>Genome sequence of the endocellular obligate symbiont of tsetse flies, Wigglesworthia glossinidia.</title>
        <authorList>
            <person name="Akman L."/>
            <person name="Yamashita A."/>
            <person name="Watanabe H."/>
            <person name="Oshima K."/>
            <person name="Shiba T."/>
            <person name="Hattori M."/>
            <person name="Aksoy S."/>
        </authorList>
    </citation>
    <scope>NUCLEOTIDE SEQUENCE [LARGE SCALE GENOMIC DNA]</scope>
</reference>
<proteinExistence type="inferred from homology"/>
<keyword id="KW-0066">ATP synthesis</keyword>
<keyword id="KW-0067">ATP-binding</keyword>
<keyword id="KW-1003">Cell membrane</keyword>
<keyword id="KW-0139">CF(1)</keyword>
<keyword id="KW-0375">Hydrogen ion transport</keyword>
<keyword id="KW-0406">Ion transport</keyword>
<keyword id="KW-0472">Membrane</keyword>
<keyword id="KW-0547">Nucleotide-binding</keyword>
<keyword id="KW-1185">Reference proteome</keyword>
<keyword id="KW-1278">Translocase</keyword>
<keyword id="KW-0813">Transport</keyword>
<protein>
    <recommendedName>
        <fullName evidence="1">ATP synthase subunit beta</fullName>
        <ecNumber evidence="1">7.1.2.2</ecNumber>
    </recommendedName>
    <alternativeName>
        <fullName evidence="1">ATP synthase F1 sector subunit beta</fullName>
    </alternativeName>
    <alternativeName>
        <fullName evidence="1">F-ATPase subunit beta</fullName>
    </alternativeName>
</protein>
<evidence type="ECO:0000255" key="1">
    <source>
        <dbReference type="HAMAP-Rule" id="MF_01347"/>
    </source>
</evidence>
<name>ATPB_WIGBR</name>